<comment type="function">
    <text evidence="2">Involved in the final steps of the cell wall sulfolipid-1 (SL-1) biosynthesis. Catalyzes two successive acylations of the precursor 2-palmitoyl-3-(C43)-phthioceranyl-alpha, alpha'-D-trehalose-2'-sulfate (SL1278) to yield the tetraacylated sulfolipid SL-1.</text>
</comment>
<comment type="catalytic activity">
    <reaction evidence="2">
        <text>3 3'-(hydroxy)phthioceranyl-2'-palmitoyl(stearoyl)-2-O-sulfo-alpha,alpha-trehalose = 3,6,6'-tris-(hydroxy)phthioceranyl-2-palmitoyl(stearoyl)-2'-sulfo-alpha-alpha-trehalose + 2 2'-palmitoyl/stearoyl-2-O-sulfo-alpha,alpha-trehalose.</text>
        <dbReference type="EC" id="2.3.1.284"/>
    </reaction>
</comment>
<comment type="activity regulation">
    <text evidence="2">Activity is potentiated by the SL-1 transporter MmpL8. Inhibited by the lipase inhibitor tetrahydrolipstatin (THL).</text>
</comment>
<comment type="subcellular location">
    <subcellularLocation>
        <location evidence="2">Cell inner membrane</location>
        <topology evidence="1">Single-pass membrane protein</topology>
    </subcellularLocation>
    <text evidence="2">The catalytic site is on the cytoplasmic side of the inner membrane.</text>
</comment>
<comment type="disruption phenotype">
    <text evidence="2">Inactivation of the mmpL8 gene interrupts the normal biosynthesis of SL-1 and leads to the accumulation of the precursor SL1278.</text>
</comment>
<comment type="similarity">
    <text evidence="4">Belongs to the mycobacterial PPE family.</text>
</comment>
<dbReference type="EC" id="2.3.1.284" evidence="2"/>
<dbReference type="EMBL" id="AL123456">
    <property type="protein sequence ID" value="CCP46651.1"/>
    <property type="molecule type" value="Genomic_DNA"/>
</dbReference>
<dbReference type="EMBL" id="CP003248">
    <property type="protein sequence ID" value="AFN51848.1"/>
    <property type="molecule type" value="Genomic_DNA"/>
</dbReference>
<dbReference type="EMBL" id="JLDD01000048">
    <property type="protein sequence ID" value="KBJ24899.1"/>
    <property type="molecule type" value="Genomic_DNA"/>
</dbReference>
<dbReference type="RefSeq" id="NP_218339.1">
    <property type="nucleotide sequence ID" value="NC_000962.3"/>
</dbReference>
<dbReference type="RefSeq" id="WP_003899709.1">
    <property type="nucleotide sequence ID" value="NZ_NVQJ01000022.1"/>
</dbReference>
<dbReference type="STRING" id="83332.Rv3822"/>
<dbReference type="ESTHER" id="myctu-Rv3822">
    <property type="family name" value="PE-PPE"/>
</dbReference>
<dbReference type="PaxDb" id="83332-Rv3822"/>
<dbReference type="DNASU" id="886155"/>
<dbReference type="GeneID" id="886155"/>
<dbReference type="KEGG" id="mtu:Rv3822"/>
<dbReference type="KEGG" id="mtv:RVBD_3822"/>
<dbReference type="PATRIC" id="fig|83332.111.peg.4249"/>
<dbReference type="TubercuList" id="Rv3822"/>
<dbReference type="eggNOG" id="COG5651">
    <property type="taxonomic scope" value="Bacteria"/>
</dbReference>
<dbReference type="HOGENOM" id="CLU_061995_1_0_11"/>
<dbReference type="InParanoid" id="O07801"/>
<dbReference type="OrthoDB" id="4749975at2"/>
<dbReference type="PhylomeDB" id="O07801"/>
<dbReference type="BioCyc" id="MetaCyc:G185E-8118-MONOMER"/>
<dbReference type="BRENDA" id="2.3.1.284">
    <property type="organism ID" value="3445"/>
</dbReference>
<dbReference type="Proteomes" id="UP000001584">
    <property type="component" value="Chromosome"/>
</dbReference>
<dbReference type="GO" id="GO:0005886">
    <property type="term" value="C:plasma membrane"/>
    <property type="evidence" value="ECO:0007669"/>
    <property type="project" value="UniProtKB-SubCell"/>
</dbReference>
<dbReference type="GO" id="GO:0016746">
    <property type="term" value="F:acyltransferase activity"/>
    <property type="evidence" value="ECO:0007669"/>
    <property type="project" value="UniProtKB-KW"/>
</dbReference>
<dbReference type="GO" id="GO:0006629">
    <property type="term" value="P:lipid metabolic process"/>
    <property type="evidence" value="ECO:0007669"/>
    <property type="project" value="UniProtKB-KW"/>
</dbReference>
<dbReference type="Gene3D" id="3.40.50.1820">
    <property type="entry name" value="alpha/beta hydrolase"/>
    <property type="match status" value="1"/>
</dbReference>
<dbReference type="InterPro" id="IPR029058">
    <property type="entry name" value="AB_hydrolase_fold"/>
</dbReference>
<dbReference type="InterPro" id="IPR013228">
    <property type="entry name" value="PE-PPE_C"/>
</dbReference>
<dbReference type="Pfam" id="PF08237">
    <property type="entry name" value="PE-PPE"/>
    <property type="match status" value="1"/>
</dbReference>
<feature type="chain" id="PRO_0000432823" description="SL1278 acyltransferase Chp1">
    <location>
        <begin position="1"/>
        <end position="404"/>
    </location>
</feature>
<feature type="topological domain" description="Periplasmic" evidence="4">
    <location>
        <begin position="1"/>
        <end position="42"/>
    </location>
</feature>
<feature type="transmembrane region" description="Helical" evidence="1">
    <location>
        <begin position="43"/>
        <end position="63"/>
    </location>
</feature>
<feature type="topological domain" description="Cytoplasmic" evidence="2">
    <location>
        <begin position="64"/>
        <end position="404"/>
    </location>
</feature>
<feature type="domain" description="PE-PPE" evidence="1">
    <location>
        <begin position="104"/>
        <end position="325"/>
    </location>
</feature>
<feature type="mutagenesis site" description="Lack of activity." evidence="2">
    <original>S</original>
    <variation>A</variation>
    <location>
        <position position="156"/>
    </location>
</feature>
<organism>
    <name type="scientific">Mycobacterium tuberculosis (strain ATCC 25618 / H37Rv)</name>
    <dbReference type="NCBI Taxonomy" id="83332"/>
    <lineage>
        <taxon>Bacteria</taxon>
        <taxon>Bacillati</taxon>
        <taxon>Actinomycetota</taxon>
        <taxon>Actinomycetes</taxon>
        <taxon>Mycobacteriales</taxon>
        <taxon>Mycobacteriaceae</taxon>
        <taxon>Mycobacterium</taxon>
        <taxon>Mycobacterium tuberculosis complex</taxon>
    </lineage>
</organism>
<keyword id="KW-0012">Acyltransferase</keyword>
<keyword id="KW-0997">Cell inner membrane</keyword>
<keyword id="KW-1003">Cell membrane</keyword>
<keyword id="KW-0444">Lipid biosynthesis</keyword>
<keyword id="KW-0443">Lipid metabolism</keyword>
<keyword id="KW-0472">Membrane</keyword>
<keyword id="KW-1185">Reference proteome</keyword>
<keyword id="KW-0808">Transferase</keyword>
<keyword id="KW-0812">Transmembrane</keyword>
<keyword id="KW-1133">Transmembrane helix</keyword>
<sequence>MKCPGVSDCVATVRHDNVFAIAAGLRWSAAVPPLHKGDAVTKLLVGAIAGGMLACAAILGDGIASADTALIVPGTAPSPYGPLRSLYHFNPAMQPQIGANYYNPTATRHVVSYPGSFWPVTGLNSPTVGSSVSAGTNNLDAAIRSTDGPIFVAGLSQGTLVLDREQARLANDPTAPPPGQLTFIKAGDPNNLLWRAFRPGTHVPIIDYTVPAPAESQYDTINIVGQYDIFSDPPNRPGNLLADLNAIAAGGYYGHSATAFSDPARVAPRDITTTTNSLGATTTTYFIRTDQLPLVRALVDMAGLPPQAAGTVDAALRPIIDRAYQPGPAPAVNPRDLVQGIRGIPAIAPAIAIPIGSTTGASAATSTAAATAAATNALRGANVGPGANKALSMVRGLLPKGKKH</sequence>
<protein>
    <recommendedName>
        <fullName evidence="4">SL1278 acyltransferase Chp1</fullName>
        <ecNumber evidence="2">2.3.1.284</ecNumber>
    </recommendedName>
    <alternativeName>
        <fullName evidence="3">Cutinase-like hydrolase protein</fullName>
    </alternativeName>
</protein>
<accession>O07801</accession>
<accession>F2GDI1</accession>
<accession>I6Y4L6</accession>
<accession>L0TGP4</accession>
<reference key="1">
    <citation type="journal article" date="1998" name="Nature">
        <title>Deciphering the biology of Mycobacterium tuberculosis from the complete genome sequence.</title>
        <authorList>
            <person name="Cole S.T."/>
            <person name="Brosch R."/>
            <person name="Parkhill J."/>
            <person name="Garnier T."/>
            <person name="Churcher C.M."/>
            <person name="Harris D.E."/>
            <person name="Gordon S.V."/>
            <person name="Eiglmeier K."/>
            <person name="Gas S."/>
            <person name="Barry C.E. III"/>
            <person name="Tekaia F."/>
            <person name="Badcock K."/>
            <person name="Basham D."/>
            <person name="Brown D."/>
            <person name="Chillingworth T."/>
            <person name="Connor R."/>
            <person name="Davies R.M."/>
            <person name="Devlin K."/>
            <person name="Feltwell T."/>
            <person name="Gentles S."/>
            <person name="Hamlin N."/>
            <person name="Holroyd S."/>
            <person name="Hornsby T."/>
            <person name="Jagels K."/>
            <person name="Krogh A."/>
            <person name="McLean J."/>
            <person name="Moule S."/>
            <person name="Murphy L.D."/>
            <person name="Oliver S."/>
            <person name="Osborne J."/>
            <person name="Quail M.A."/>
            <person name="Rajandream M.A."/>
            <person name="Rogers J."/>
            <person name="Rutter S."/>
            <person name="Seeger K."/>
            <person name="Skelton S."/>
            <person name="Squares S."/>
            <person name="Squares R."/>
            <person name="Sulston J.E."/>
            <person name="Taylor K."/>
            <person name="Whitehead S."/>
            <person name="Barrell B.G."/>
        </authorList>
    </citation>
    <scope>NUCLEOTIDE SEQUENCE [LARGE SCALE GENOMIC DNA]</scope>
    <source>
        <strain>ATCC 25618 / H37Rv</strain>
    </source>
</reference>
<reference key="2">
    <citation type="submission" date="2013-11" db="EMBL/GenBank/DDBJ databases">
        <title>The genome sequence of Mycobacterium tuberculosis H37Rv.</title>
        <authorList>
            <consortium name="The Broad Institute Genome Sequencing Platform"/>
            <person name="Galagan J."/>
            <person name="Kreiswirth B."/>
            <person name="Dobos K."/>
            <person name="Fortune S."/>
            <person name="Fitzgerald M."/>
            <person name="Young S.K."/>
            <person name="Zeng Q."/>
            <person name="Gargeya S."/>
            <person name="Abouelleil A."/>
            <person name="Alvarado L."/>
            <person name="Berlin A.M."/>
            <person name="Chapman S.B."/>
            <person name="Gainer-Dewar J."/>
            <person name="Goldberg J."/>
            <person name="Gnerre S."/>
            <person name="Griggs A."/>
            <person name="Gujja S."/>
            <person name="Hansen M."/>
            <person name="Howarth C."/>
            <person name="Imamovic A."/>
            <person name="Larimer J."/>
            <person name="McCowan C."/>
            <person name="Murphy C."/>
            <person name="Pearson M."/>
            <person name="Poon T."/>
            <person name="Priest M."/>
            <person name="Roberts A."/>
            <person name="Saif S."/>
            <person name="Shea T."/>
            <person name="Sykes S."/>
            <person name="Wortman J."/>
            <person name="Nusbaum C."/>
            <person name="Birren B."/>
        </authorList>
    </citation>
    <scope>NUCLEOTIDE SEQUENCE [LARGE SCALE GENOMIC DNA]</scope>
    <source>
        <strain>ATCC 25618 / H37Rv</strain>
    </source>
</reference>
<reference key="3">
    <citation type="submission" date="2014-04" db="EMBL/GenBank/DDBJ databases">
        <title>The genome sequence of Mycobacterium tuberculosis H37Rv.</title>
        <authorList>
            <consortium name="The Broad Institute Genomics Platform"/>
            <consortium name="The Broad Institute Genome Sequencing Center for Infectious Disease"/>
            <person name="Earl A.M."/>
            <person name="Kreiswirth B."/>
            <person name="Gomez J."/>
            <person name="Victor T."/>
            <person name="Desjardins C."/>
            <person name="Abeel T."/>
            <person name="Young S."/>
            <person name="Zeng Q."/>
            <person name="Gargeya S."/>
            <person name="Abouelleil A."/>
            <person name="Alvarado L."/>
            <person name="Chapman S.B."/>
            <person name="Gainer-Dewar J."/>
            <person name="Goldberg J."/>
            <person name="Griggs A."/>
            <person name="Gujja S."/>
            <person name="Hansen M."/>
            <person name="Howarth C."/>
            <person name="Imamovic A."/>
            <person name="Larimer J."/>
            <person name="Murphy C."/>
            <person name="Naylor J."/>
            <person name="Pearson M."/>
            <person name="Poon T.W."/>
            <person name="Priest M."/>
            <person name="Roberts A."/>
            <person name="Saif S."/>
            <person name="Shea T."/>
            <person name="Sykes S."/>
            <person name="Wortman J."/>
            <person name="Nusbaum C."/>
            <person name="Birren B."/>
        </authorList>
    </citation>
    <scope>NUCLEOTIDE SEQUENCE [LARGE SCALE GENOMIC DNA]</scope>
    <source>
        <strain>ATCC 25618 / H37Rv</strain>
    </source>
</reference>
<reference key="4">
    <citation type="journal article" date="2011" name="Mol. Cell. Proteomics">
        <title>Proteogenomic analysis of Mycobacterium tuberculosis by high resolution mass spectrometry.</title>
        <authorList>
            <person name="Kelkar D.S."/>
            <person name="Kumar D."/>
            <person name="Kumar P."/>
            <person name="Balakrishnan L."/>
            <person name="Muthusamy B."/>
            <person name="Yadav A.K."/>
            <person name="Shrivastava P."/>
            <person name="Marimuthu A."/>
            <person name="Anand S."/>
            <person name="Sundaram H."/>
            <person name="Kingsbury R."/>
            <person name="Harsha H.C."/>
            <person name="Nair B."/>
            <person name="Prasad T.S."/>
            <person name="Chauhan D.S."/>
            <person name="Katoch K."/>
            <person name="Katoch V.M."/>
            <person name="Kumar P."/>
            <person name="Chaerkady R."/>
            <person name="Ramachandran S."/>
            <person name="Dash D."/>
            <person name="Pandey A."/>
        </authorList>
    </citation>
    <scope>IDENTIFICATION BY MASS SPECTROMETRY [LARGE SCALE ANALYSIS]</scope>
    <source>
        <strain>ATCC 25618 / H37Rv</strain>
    </source>
</reference>
<reference key="5">
    <citation type="journal article" date="2012" name="J. Biol. Chem.">
        <title>Elucidation and chemical modulation of sulfolipid-1 biosynthesis in Mycobacterium tuberculosis.</title>
        <authorList>
            <person name="Seeliger J.C."/>
            <person name="Holsclaw C.M."/>
            <person name="Schelle M.W."/>
            <person name="Botyanszki Z."/>
            <person name="Gilmore S.A."/>
            <person name="Tully S.E."/>
            <person name="Niederweis M."/>
            <person name="Cravatt B.F."/>
            <person name="Leary J.A."/>
            <person name="Bertozzi C.R."/>
        </authorList>
    </citation>
    <scope>FUNCTION</scope>
    <scope>CATALYTIC ACTIVITY</scope>
    <scope>ACTIVITY REGULATION</scope>
    <scope>SUBCELLULAR LOCATION</scope>
    <scope>TOPOLOGY</scope>
    <scope>DISRUPTION PHENOTYPE</scope>
    <scope>MUTAGENESIS OF SER-156</scope>
    <source>
        <strain>ATCC 35801 / TMC 107 / Erdman</strain>
    </source>
</reference>
<proteinExistence type="evidence at protein level"/>
<evidence type="ECO:0000255" key="1"/>
<evidence type="ECO:0000269" key="2">
    <source>
    </source>
</evidence>
<evidence type="ECO:0000303" key="3">
    <source>
    </source>
</evidence>
<evidence type="ECO:0000305" key="4"/>
<evidence type="ECO:0000312" key="5">
    <source>
        <dbReference type="EMBL" id="AFN51848.1"/>
    </source>
</evidence>
<evidence type="ECO:0000312" key="6">
    <source>
        <dbReference type="EMBL" id="CCP46651.1"/>
    </source>
</evidence>
<evidence type="ECO:0000312" key="7">
    <source>
        <dbReference type="EMBL" id="KBJ24899.1"/>
    </source>
</evidence>
<gene>
    <name evidence="3" type="primary">chp1</name>
    <name evidence="6" type="ordered locus">Rv3822</name>
    <name evidence="5" type="ordered locus">RVBD_3822</name>
    <name evidence="7" type="ORF">P425_03980</name>
</gene>
<name>CHP1_MYCTU</name>